<accession>B3EUF2</accession>
<sequence length="101" mass="11457">MAQKIRIKLKSYDYNLIDKSAEKIVQAVKNTKAVVSGPIPLPSKKEVYTVLRSPHVYKESREQFQLSTYKRLIDIYSNSSKTIDALMKLELPSGVEVSIKA</sequence>
<proteinExistence type="inferred from homology"/>
<feature type="chain" id="PRO_1000127074" description="Small ribosomal subunit protein uS10">
    <location>
        <begin position="1"/>
        <end position="101"/>
    </location>
</feature>
<organism>
    <name type="scientific">Amoebophilus asiaticus (strain 5a2)</name>
    <dbReference type="NCBI Taxonomy" id="452471"/>
    <lineage>
        <taxon>Bacteria</taxon>
        <taxon>Pseudomonadati</taxon>
        <taxon>Bacteroidota</taxon>
        <taxon>Cytophagia</taxon>
        <taxon>Cytophagales</taxon>
        <taxon>Amoebophilaceae</taxon>
        <taxon>Candidatus Amoebophilus</taxon>
    </lineage>
</organism>
<protein>
    <recommendedName>
        <fullName evidence="1">Small ribosomal subunit protein uS10</fullName>
    </recommendedName>
    <alternativeName>
        <fullName evidence="2">30S ribosomal protein S10</fullName>
    </alternativeName>
</protein>
<reference key="1">
    <citation type="journal article" date="2010" name="J. Bacteriol.">
        <title>The genome of the amoeba symbiont 'Candidatus Amoebophilus asiaticus' reveals common mechanisms for host cell interaction among amoeba-associated bacteria.</title>
        <authorList>
            <person name="Schmitz-Esser S."/>
            <person name="Tischler P."/>
            <person name="Arnold R."/>
            <person name="Montanaro J."/>
            <person name="Wagner M."/>
            <person name="Rattei T."/>
            <person name="Horn M."/>
        </authorList>
    </citation>
    <scope>NUCLEOTIDE SEQUENCE [LARGE SCALE GENOMIC DNA]</scope>
    <source>
        <strain>5a2</strain>
    </source>
</reference>
<keyword id="KW-1185">Reference proteome</keyword>
<keyword id="KW-0687">Ribonucleoprotein</keyword>
<keyword id="KW-0689">Ribosomal protein</keyword>
<evidence type="ECO:0000255" key="1">
    <source>
        <dbReference type="HAMAP-Rule" id="MF_00508"/>
    </source>
</evidence>
<evidence type="ECO:0000305" key="2"/>
<dbReference type="EMBL" id="CP001102">
    <property type="protein sequence ID" value="ACE05571.1"/>
    <property type="molecule type" value="Genomic_DNA"/>
</dbReference>
<dbReference type="RefSeq" id="WP_012472342.1">
    <property type="nucleotide sequence ID" value="NC_010830.1"/>
</dbReference>
<dbReference type="SMR" id="B3EUF2"/>
<dbReference type="STRING" id="452471.Aasi_0124"/>
<dbReference type="KEGG" id="aas:Aasi_0124"/>
<dbReference type="eggNOG" id="COG0051">
    <property type="taxonomic scope" value="Bacteria"/>
</dbReference>
<dbReference type="HOGENOM" id="CLU_122625_1_3_10"/>
<dbReference type="OrthoDB" id="9804464at2"/>
<dbReference type="Proteomes" id="UP000001227">
    <property type="component" value="Chromosome"/>
</dbReference>
<dbReference type="GO" id="GO:1990904">
    <property type="term" value="C:ribonucleoprotein complex"/>
    <property type="evidence" value="ECO:0007669"/>
    <property type="project" value="UniProtKB-KW"/>
</dbReference>
<dbReference type="GO" id="GO:0005840">
    <property type="term" value="C:ribosome"/>
    <property type="evidence" value="ECO:0007669"/>
    <property type="project" value="UniProtKB-KW"/>
</dbReference>
<dbReference type="GO" id="GO:0003735">
    <property type="term" value="F:structural constituent of ribosome"/>
    <property type="evidence" value="ECO:0007669"/>
    <property type="project" value="InterPro"/>
</dbReference>
<dbReference type="GO" id="GO:0000049">
    <property type="term" value="F:tRNA binding"/>
    <property type="evidence" value="ECO:0007669"/>
    <property type="project" value="UniProtKB-UniRule"/>
</dbReference>
<dbReference type="GO" id="GO:0006412">
    <property type="term" value="P:translation"/>
    <property type="evidence" value="ECO:0007669"/>
    <property type="project" value="UniProtKB-UniRule"/>
</dbReference>
<dbReference type="FunFam" id="3.30.70.600:FF:000003">
    <property type="entry name" value="30S ribosomal protein S10"/>
    <property type="match status" value="1"/>
</dbReference>
<dbReference type="Gene3D" id="3.30.70.600">
    <property type="entry name" value="Ribosomal protein S10 domain"/>
    <property type="match status" value="1"/>
</dbReference>
<dbReference type="HAMAP" id="MF_00508">
    <property type="entry name" value="Ribosomal_uS10"/>
    <property type="match status" value="1"/>
</dbReference>
<dbReference type="InterPro" id="IPR001848">
    <property type="entry name" value="Ribosomal_uS10"/>
</dbReference>
<dbReference type="InterPro" id="IPR027486">
    <property type="entry name" value="Ribosomal_uS10_dom"/>
</dbReference>
<dbReference type="InterPro" id="IPR036838">
    <property type="entry name" value="Ribosomal_uS10_dom_sf"/>
</dbReference>
<dbReference type="NCBIfam" id="NF001861">
    <property type="entry name" value="PRK00596.1"/>
    <property type="match status" value="1"/>
</dbReference>
<dbReference type="NCBIfam" id="TIGR01049">
    <property type="entry name" value="rpsJ_bact"/>
    <property type="match status" value="1"/>
</dbReference>
<dbReference type="PANTHER" id="PTHR11700">
    <property type="entry name" value="30S RIBOSOMAL PROTEIN S10 FAMILY MEMBER"/>
    <property type="match status" value="1"/>
</dbReference>
<dbReference type="Pfam" id="PF00338">
    <property type="entry name" value="Ribosomal_S10"/>
    <property type="match status" value="1"/>
</dbReference>
<dbReference type="PRINTS" id="PR00971">
    <property type="entry name" value="RIBOSOMALS10"/>
</dbReference>
<dbReference type="SMART" id="SM01403">
    <property type="entry name" value="Ribosomal_S10"/>
    <property type="match status" value="1"/>
</dbReference>
<dbReference type="SUPFAM" id="SSF54999">
    <property type="entry name" value="Ribosomal protein S10"/>
    <property type="match status" value="1"/>
</dbReference>
<comment type="function">
    <text evidence="1">Involved in the binding of tRNA to the ribosomes.</text>
</comment>
<comment type="subunit">
    <text evidence="1">Part of the 30S ribosomal subunit.</text>
</comment>
<comment type="similarity">
    <text evidence="1">Belongs to the universal ribosomal protein uS10 family.</text>
</comment>
<gene>
    <name evidence="1" type="primary">rpsJ</name>
    <name type="ordered locus">Aasi_0124</name>
</gene>
<name>RS10_AMOA5</name>